<feature type="chain" id="PRO_1000001559" description="Recombination protein RecR">
    <location>
        <begin position="1"/>
        <end position="198"/>
    </location>
</feature>
<feature type="domain" description="Toprim" evidence="1">
    <location>
        <begin position="80"/>
        <end position="175"/>
    </location>
</feature>
<feature type="zinc finger region" description="C4-type" evidence="1">
    <location>
        <begin position="57"/>
        <end position="72"/>
    </location>
</feature>
<gene>
    <name evidence="1" type="primary">recR</name>
    <name type="ordered locus">llmg_0359</name>
</gene>
<dbReference type="EMBL" id="AM406671">
    <property type="protein sequence ID" value="CAL96964.1"/>
    <property type="molecule type" value="Genomic_DNA"/>
</dbReference>
<dbReference type="RefSeq" id="WP_011834417.1">
    <property type="nucleotide sequence ID" value="NC_009004.1"/>
</dbReference>
<dbReference type="SMR" id="A2RI71"/>
<dbReference type="STRING" id="416870.llmg_0359"/>
<dbReference type="GeneID" id="61108663"/>
<dbReference type="KEGG" id="llm:llmg_0359"/>
<dbReference type="eggNOG" id="COG0353">
    <property type="taxonomic scope" value="Bacteria"/>
</dbReference>
<dbReference type="HOGENOM" id="CLU_060739_1_0_9"/>
<dbReference type="OrthoDB" id="9802672at2"/>
<dbReference type="PhylomeDB" id="A2RI71"/>
<dbReference type="Proteomes" id="UP000000364">
    <property type="component" value="Chromosome"/>
</dbReference>
<dbReference type="GO" id="GO:0003677">
    <property type="term" value="F:DNA binding"/>
    <property type="evidence" value="ECO:0007669"/>
    <property type="project" value="UniProtKB-UniRule"/>
</dbReference>
<dbReference type="GO" id="GO:0008270">
    <property type="term" value="F:zinc ion binding"/>
    <property type="evidence" value="ECO:0007669"/>
    <property type="project" value="UniProtKB-KW"/>
</dbReference>
<dbReference type="GO" id="GO:0006310">
    <property type="term" value="P:DNA recombination"/>
    <property type="evidence" value="ECO:0007669"/>
    <property type="project" value="UniProtKB-UniRule"/>
</dbReference>
<dbReference type="GO" id="GO:0006281">
    <property type="term" value="P:DNA repair"/>
    <property type="evidence" value="ECO:0007669"/>
    <property type="project" value="UniProtKB-UniRule"/>
</dbReference>
<dbReference type="CDD" id="cd01025">
    <property type="entry name" value="TOPRIM_recR"/>
    <property type="match status" value="1"/>
</dbReference>
<dbReference type="Gene3D" id="3.30.60.80">
    <property type="match status" value="1"/>
</dbReference>
<dbReference type="Gene3D" id="3.40.1360.10">
    <property type="match status" value="1"/>
</dbReference>
<dbReference type="Gene3D" id="6.10.250.240">
    <property type="match status" value="1"/>
</dbReference>
<dbReference type="Gene3D" id="1.10.8.420">
    <property type="entry name" value="RecR Domain 1"/>
    <property type="match status" value="1"/>
</dbReference>
<dbReference type="HAMAP" id="MF_00017">
    <property type="entry name" value="RecR"/>
    <property type="match status" value="1"/>
</dbReference>
<dbReference type="InterPro" id="IPR000093">
    <property type="entry name" value="DNA_Rcmb_RecR"/>
</dbReference>
<dbReference type="InterPro" id="IPR023627">
    <property type="entry name" value="Rcmb_RecR"/>
</dbReference>
<dbReference type="InterPro" id="IPR015967">
    <property type="entry name" value="Rcmb_RecR_Znf"/>
</dbReference>
<dbReference type="InterPro" id="IPR006171">
    <property type="entry name" value="TOPRIM_dom"/>
</dbReference>
<dbReference type="InterPro" id="IPR034137">
    <property type="entry name" value="TOPRIM_RecR"/>
</dbReference>
<dbReference type="NCBIfam" id="TIGR00615">
    <property type="entry name" value="recR"/>
    <property type="match status" value="1"/>
</dbReference>
<dbReference type="PANTHER" id="PTHR30446">
    <property type="entry name" value="RECOMBINATION PROTEIN RECR"/>
    <property type="match status" value="1"/>
</dbReference>
<dbReference type="PANTHER" id="PTHR30446:SF0">
    <property type="entry name" value="RECOMBINATION PROTEIN RECR"/>
    <property type="match status" value="1"/>
</dbReference>
<dbReference type="Pfam" id="PF21175">
    <property type="entry name" value="RecR_C"/>
    <property type="match status" value="1"/>
</dbReference>
<dbReference type="Pfam" id="PF21176">
    <property type="entry name" value="RecR_HhH"/>
    <property type="match status" value="1"/>
</dbReference>
<dbReference type="Pfam" id="PF02132">
    <property type="entry name" value="RecR_ZnF"/>
    <property type="match status" value="1"/>
</dbReference>
<dbReference type="Pfam" id="PF13662">
    <property type="entry name" value="Toprim_4"/>
    <property type="match status" value="1"/>
</dbReference>
<dbReference type="SMART" id="SM00493">
    <property type="entry name" value="TOPRIM"/>
    <property type="match status" value="1"/>
</dbReference>
<dbReference type="SUPFAM" id="SSF111304">
    <property type="entry name" value="Recombination protein RecR"/>
    <property type="match status" value="1"/>
</dbReference>
<dbReference type="PROSITE" id="PS01300">
    <property type="entry name" value="RECR"/>
    <property type="match status" value="1"/>
</dbReference>
<dbReference type="PROSITE" id="PS50880">
    <property type="entry name" value="TOPRIM"/>
    <property type="match status" value="1"/>
</dbReference>
<keyword id="KW-0227">DNA damage</keyword>
<keyword id="KW-0233">DNA recombination</keyword>
<keyword id="KW-0234">DNA repair</keyword>
<keyword id="KW-0479">Metal-binding</keyword>
<keyword id="KW-0862">Zinc</keyword>
<keyword id="KW-0863">Zinc-finger</keyword>
<evidence type="ECO:0000255" key="1">
    <source>
        <dbReference type="HAMAP-Rule" id="MF_00017"/>
    </source>
</evidence>
<reference key="1">
    <citation type="journal article" date="2007" name="J. Bacteriol.">
        <title>The complete genome sequence of the lactic acid bacterial paradigm Lactococcus lactis subsp. cremoris MG1363.</title>
        <authorList>
            <person name="Wegmann U."/>
            <person name="O'Connell-Motherway M."/>
            <person name="Zomer A."/>
            <person name="Buist G."/>
            <person name="Shearman C."/>
            <person name="Canchaya C."/>
            <person name="Ventura M."/>
            <person name="Goesmann A."/>
            <person name="Gasson M.J."/>
            <person name="Kuipers O.P."/>
            <person name="van Sinderen D."/>
            <person name="Kok J."/>
        </authorList>
    </citation>
    <scope>NUCLEOTIDE SEQUENCE [LARGE SCALE GENOMIC DNA]</scope>
    <source>
        <strain>MG1363</strain>
    </source>
</reference>
<sequence length="198" mass="21950">MYYPEPIARLIESFSKLPGIGQKTATRLAFYTIGMEDQDVNEFAKNLLSAKRDLRFCSICGNLTESDPCAICTDPTRDRTTILVVEESKDVLAMEKIREYRGLYHVLHGTISPMNGISPDEINVKSLITRLMDSEVKEVIIATNATSDGEATAMYLARMIKPAGIKVTRLARGLAVGSDIEYADEVTLSKAVENRLEI</sequence>
<organism>
    <name type="scientific">Lactococcus lactis subsp. cremoris (strain MG1363)</name>
    <dbReference type="NCBI Taxonomy" id="416870"/>
    <lineage>
        <taxon>Bacteria</taxon>
        <taxon>Bacillati</taxon>
        <taxon>Bacillota</taxon>
        <taxon>Bacilli</taxon>
        <taxon>Lactobacillales</taxon>
        <taxon>Streptococcaceae</taxon>
        <taxon>Lactococcus</taxon>
        <taxon>Lactococcus cremoris subsp. cremoris</taxon>
    </lineage>
</organism>
<name>RECR_LACLM</name>
<proteinExistence type="inferred from homology"/>
<comment type="function">
    <text evidence="1">May play a role in DNA repair. It seems to be involved in an RecBC-independent recombinational process of DNA repair. It may act with RecF and RecO.</text>
</comment>
<comment type="similarity">
    <text evidence="1">Belongs to the RecR family.</text>
</comment>
<protein>
    <recommendedName>
        <fullName evidence="1">Recombination protein RecR</fullName>
    </recommendedName>
</protein>
<accession>A2RI71</accession>